<keyword id="KW-1185">Reference proteome</keyword>
<evidence type="ECO:0000256" key="1">
    <source>
        <dbReference type="SAM" id="MobiDB-lite"/>
    </source>
</evidence>
<organism>
    <name type="scientific">Schizosaccharomyces pombe (strain 972 / ATCC 24843)</name>
    <name type="common">Fission yeast</name>
    <dbReference type="NCBI Taxonomy" id="284812"/>
    <lineage>
        <taxon>Eukaryota</taxon>
        <taxon>Fungi</taxon>
        <taxon>Dikarya</taxon>
        <taxon>Ascomycota</taxon>
        <taxon>Taphrinomycotina</taxon>
        <taxon>Schizosaccharomycetes</taxon>
        <taxon>Schizosaccharomycetales</taxon>
        <taxon>Schizosaccharomycetaceae</taxon>
        <taxon>Schizosaccharomyces</taxon>
    </lineage>
</organism>
<reference key="1">
    <citation type="journal article" date="2002" name="Nature">
        <title>The genome sequence of Schizosaccharomyces pombe.</title>
        <authorList>
            <person name="Wood V."/>
            <person name="Gwilliam R."/>
            <person name="Rajandream M.A."/>
            <person name="Lyne M.H."/>
            <person name="Lyne R."/>
            <person name="Stewart A."/>
            <person name="Sgouros J.G."/>
            <person name="Peat N."/>
            <person name="Hayles J."/>
            <person name="Baker S.G."/>
            <person name="Basham D."/>
            <person name="Bowman S."/>
            <person name="Brooks K."/>
            <person name="Brown D."/>
            <person name="Brown S."/>
            <person name="Chillingworth T."/>
            <person name="Churcher C.M."/>
            <person name="Collins M."/>
            <person name="Connor R."/>
            <person name="Cronin A."/>
            <person name="Davis P."/>
            <person name="Feltwell T."/>
            <person name="Fraser A."/>
            <person name="Gentles S."/>
            <person name="Goble A."/>
            <person name="Hamlin N."/>
            <person name="Harris D.E."/>
            <person name="Hidalgo J."/>
            <person name="Hodgson G."/>
            <person name="Holroyd S."/>
            <person name="Hornsby T."/>
            <person name="Howarth S."/>
            <person name="Huckle E.J."/>
            <person name="Hunt S."/>
            <person name="Jagels K."/>
            <person name="James K.D."/>
            <person name="Jones L."/>
            <person name="Jones M."/>
            <person name="Leather S."/>
            <person name="McDonald S."/>
            <person name="McLean J."/>
            <person name="Mooney P."/>
            <person name="Moule S."/>
            <person name="Mungall K.L."/>
            <person name="Murphy L.D."/>
            <person name="Niblett D."/>
            <person name="Odell C."/>
            <person name="Oliver K."/>
            <person name="O'Neil S."/>
            <person name="Pearson D."/>
            <person name="Quail M.A."/>
            <person name="Rabbinowitsch E."/>
            <person name="Rutherford K.M."/>
            <person name="Rutter S."/>
            <person name="Saunders D."/>
            <person name="Seeger K."/>
            <person name="Sharp S."/>
            <person name="Skelton J."/>
            <person name="Simmonds M.N."/>
            <person name="Squares R."/>
            <person name="Squares S."/>
            <person name="Stevens K."/>
            <person name="Taylor K."/>
            <person name="Taylor R.G."/>
            <person name="Tivey A."/>
            <person name="Walsh S.V."/>
            <person name="Warren T."/>
            <person name="Whitehead S."/>
            <person name="Woodward J.R."/>
            <person name="Volckaert G."/>
            <person name="Aert R."/>
            <person name="Robben J."/>
            <person name="Grymonprez B."/>
            <person name="Weltjens I."/>
            <person name="Vanstreels E."/>
            <person name="Rieger M."/>
            <person name="Schaefer M."/>
            <person name="Mueller-Auer S."/>
            <person name="Gabel C."/>
            <person name="Fuchs M."/>
            <person name="Duesterhoeft A."/>
            <person name="Fritzc C."/>
            <person name="Holzer E."/>
            <person name="Moestl D."/>
            <person name="Hilbert H."/>
            <person name="Borzym K."/>
            <person name="Langer I."/>
            <person name="Beck A."/>
            <person name="Lehrach H."/>
            <person name="Reinhardt R."/>
            <person name="Pohl T.M."/>
            <person name="Eger P."/>
            <person name="Zimmermann W."/>
            <person name="Wedler H."/>
            <person name="Wambutt R."/>
            <person name="Purnelle B."/>
            <person name="Goffeau A."/>
            <person name="Cadieu E."/>
            <person name="Dreano S."/>
            <person name="Gloux S."/>
            <person name="Lelaure V."/>
            <person name="Mottier S."/>
            <person name="Galibert F."/>
            <person name="Aves S.J."/>
            <person name="Xiang Z."/>
            <person name="Hunt C."/>
            <person name="Moore K."/>
            <person name="Hurst S.M."/>
            <person name="Lucas M."/>
            <person name="Rochet M."/>
            <person name="Gaillardin C."/>
            <person name="Tallada V.A."/>
            <person name="Garzon A."/>
            <person name="Thode G."/>
            <person name="Daga R.R."/>
            <person name="Cruzado L."/>
            <person name="Jimenez J."/>
            <person name="Sanchez M."/>
            <person name="del Rey F."/>
            <person name="Benito J."/>
            <person name="Dominguez A."/>
            <person name="Revuelta J.L."/>
            <person name="Moreno S."/>
            <person name="Armstrong J."/>
            <person name="Forsburg S.L."/>
            <person name="Cerutti L."/>
            <person name="Lowe T."/>
            <person name="McCombie W.R."/>
            <person name="Paulsen I."/>
            <person name="Potashkin J."/>
            <person name="Shpakovski G.V."/>
            <person name="Ussery D."/>
            <person name="Barrell B.G."/>
            <person name="Nurse P."/>
        </authorList>
    </citation>
    <scope>NUCLEOTIDE SEQUENCE [LARGE SCALE GENOMIC DNA]</scope>
    <source>
        <strain>972 / ATCC 24843</strain>
    </source>
</reference>
<reference key="2">
    <citation type="journal article" date="2008" name="Nature">
        <title>Dynamic repertoire of a eukaryotic transcriptome surveyed at single-nucleotide resolution.</title>
        <authorList>
            <person name="Wilhelm B.T."/>
            <person name="Marguerat S."/>
            <person name="Watt S."/>
            <person name="Schubert F."/>
            <person name="Wood V."/>
            <person name="Goodhead I."/>
            <person name="Penkett C.J."/>
            <person name="Rogers J."/>
            <person name="Baehler J."/>
        </authorList>
    </citation>
    <scope>IDENTIFICATION</scope>
</reference>
<name>YQO9_SCHPO</name>
<accession>C6Y4D4</accession>
<dbReference type="EMBL" id="CU329672">
    <property type="protein sequence ID" value="CBA11521.1"/>
    <property type="molecule type" value="Genomic_DNA"/>
</dbReference>
<dbReference type="RefSeq" id="XP_002788953.1">
    <property type="nucleotide sequence ID" value="XM_002788907.2"/>
</dbReference>
<dbReference type="SMR" id="C6Y4D4"/>
<dbReference type="PaxDb" id="4896-SPCC569.09.1"/>
<dbReference type="EnsemblFungi" id="SPCC569.09.1">
    <property type="protein sequence ID" value="SPCC569.09.1:pep"/>
    <property type="gene ID" value="SPCC569.09"/>
</dbReference>
<dbReference type="PomBase" id="SPCC569.09"/>
<dbReference type="VEuPathDB" id="FungiDB:SPCC569.09"/>
<dbReference type="HOGENOM" id="CLU_2321698_0_0_1"/>
<dbReference type="InParanoid" id="C6Y4D4"/>
<dbReference type="PRO" id="PR:C6Y4D4"/>
<dbReference type="Proteomes" id="UP000002485">
    <property type="component" value="Chromosome III"/>
</dbReference>
<sequence length="99" mass="11643">MSDFPPSYQQHENDRMVPQESSTSNNASEFNVPKKSNRRLSVVQQDESVLNREFDDLTPEVGFDADKWERKTKHPNPQKPFDFKRKPEKKYHSKSDVGF</sequence>
<gene>
    <name type="ORF">SPCC569.09</name>
</gene>
<proteinExistence type="evidence at transcript level"/>
<feature type="chain" id="PRO_0000389152" description="Uncharacterized protein C569.09">
    <location>
        <begin position="1"/>
        <end position="99"/>
    </location>
</feature>
<feature type="region of interest" description="Disordered" evidence="1">
    <location>
        <begin position="1"/>
        <end position="99"/>
    </location>
</feature>
<feature type="compositionally biased region" description="Polar residues" evidence="1">
    <location>
        <begin position="19"/>
        <end position="29"/>
    </location>
</feature>
<protein>
    <recommendedName>
        <fullName>Uncharacterized protein C569.09</fullName>
    </recommendedName>
</protein>